<reference key="1">
    <citation type="journal article" date="2001" name="J. Bacteriol.">
        <title>Genome of the bacterium Streptococcus pneumoniae strain R6.</title>
        <authorList>
            <person name="Hoskins J."/>
            <person name="Alborn W.E. Jr."/>
            <person name="Arnold J."/>
            <person name="Blaszczak L.C."/>
            <person name="Burgett S."/>
            <person name="DeHoff B.S."/>
            <person name="Estrem S.T."/>
            <person name="Fritz L."/>
            <person name="Fu D.-J."/>
            <person name="Fuller W."/>
            <person name="Geringer C."/>
            <person name="Gilmour R."/>
            <person name="Glass J.S."/>
            <person name="Khoja H."/>
            <person name="Kraft A.R."/>
            <person name="Lagace R.E."/>
            <person name="LeBlanc D.J."/>
            <person name="Lee L.N."/>
            <person name="Lefkowitz E.J."/>
            <person name="Lu J."/>
            <person name="Matsushima P."/>
            <person name="McAhren S.M."/>
            <person name="McHenney M."/>
            <person name="McLeaster K."/>
            <person name="Mundy C.W."/>
            <person name="Nicas T.I."/>
            <person name="Norris F.H."/>
            <person name="O'Gara M."/>
            <person name="Peery R.B."/>
            <person name="Robertson G.T."/>
            <person name="Rockey P."/>
            <person name="Sun P.-M."/>
            <person name="Winkler M.E."/>
            <person name="Yang Y."/>
            <person name="Young-Bellido M."/>
            <person name="Zhao G."/>
            <person name="Zook C.A."/>
            <person name="Baltz R.H."/>
            <person name="Jaskunas S.R."/>
            <person name="Rosteck P.R. Jr."/>
            <person name="Skatrud P.L."/>
            <person name="Glass J.I."/>
        </authorList>
    </citation>
    <scope>NUCLEOTIDE SEQUENCE [LARGE SCALE GENOMIC DNA]</scope>
    <source>
        <strain>ATCC BAA-255 / R6</strain>
    </source>
</reference>
<reference key="2">
    <citation type="journal article" date="2008" name="J. Biol. Chem.">
        <title>PfbA, a novel plasmin- and fibronectin-binding protein of Streptococcus pneumoniae, contributes to fibronectin-dependent adhesion and antiphagocytosis.</title>
        <authorList>
            <person name="Yamaguchi M."/>
            <person name="Terao Y."/>
            <person name="Mori Y."/>
            <person name="Hamada S."/>
            <person name="Kawabata S."/>
        </authorList>
    </citation>
    <scope>SUBCELLULAR LOCATION</scope>
    <scope>BINDING TO HOST EXTRACELLULAR MATRIX COMPONENTS</scope>
    <scope>PROBABLE INVOLVEMENT IN VIRULENCE</scope>
    <scope>BIOTECHNOLOGY</scope>
    <scope>DISRUPTION PHENOTYPE</scope>
</reference>
<evidence type="ECO:0000255" key="1"/>
<evidence type="ECO:0000255" key="2">
    <source>
        <dbReference type="PROSITE-ProRule" id="PRU00477"/>
    </source>
</evidence>
<evidence type="ECO:0000256" key="3">
    <source>
        <dbReference type="SAM" id="MobiDB-lite"/>
    </source>
</evidence>
<evidence type="ECO:0000269" key="4">
    <source>
    </source>
</evidence>
<evidence type="ECO:0000305" key="5">
    <source>
    </source>
</evidence>
<evidence type="ECO:0007829" key="6">
    <source>
        <dbReference type="PDB" id="4MR0"/>
    </source>
</evidence>
<accession>Q8CYC9</accession>
<feature type="signal peptide" evidence="1">
    <location>
        <begin position="1"/>
        <end position="45"/>
    </location>
</feature>
<feature type="chain" id="PRO_0000380122" description="Plasmin and fibronectin-binding protein A">
    <location>
        <begin position="46"/>
        <end position="688"/>
    </location>
</feature>
<feature type="propeptide" id="PRO_0000380123" description="Removed by sortase" evidence="2">
    <location>
        <begin position="689"/>
        <end position="719"/>
    </location>
</feature>
<feature type="repeat" description="PbH1 1">
    <location>
        <begin position="287"/>
        <end position="310"/>
    </location>
</feature>
<feature type="repeat" description="PbH1 2">
    <location>
        <begin position="362"/>
        <end position="384"/>
    </location>
</feature>
<feature type="repeat" description="PbH1 3">
    <location>
        <begin position="397"/>
        <end position="419"/>
    </location>
</feature>
<feature type="repeat" description="PbH1 4">
    <location>
        <begin position="497"/>
        <end position="523"/>
    </location>
</feature>
<feature type="repeat" description="PbH1 5">
    <location>
        <begin position="525"/>
        <end position="546"/>
    </location>
</feature>
<feature type="region of interest" description="Disordered" evidence="3">
    <location>
        <begin position="56"/>
        <end position="76"/>
    </location>
</feature>
<feature type="region of interest" description="Disordered" evidence="3">
    <location>
        <begin position="109"/>
        <end position="128"/>
    </location>
</feature>
<feature type="region of interest" description="Disordered" evidence="3">
    <location>
        <begin position="606"/>
        <end position="655"/>
    </location>
</feature>
<feature type="coiled-coil region" evidence="1">
    <location>
        <begin position="601"/>
        <end position="658"/>
    </location>
</feature>
<feature type="short sequence motif" description="LPXTG sorting signal" evidence="2">
    <location>
        <begin position="685"/>
        <end position="689"/>
    </location>
</feature>
<feature type="compositionally biased region" description="Basic and acidic residues" evidence="3">
    <location>
        <begin position="606"/>
        <end position="617"/>
    </location>
</feature>
<feature type="compositionally biased region" description="Polar residues" evidence="3">
    <location>
        <begin position="623"/>
        <end position="634"/>
    </location>
</feature>
<feature type="compositionally biased region" description="Basic and acidic residues" evidence="3">
    <location>
        <begin position="635"/>
        <end position="655"/>
    </location>
</feature>
<feature type="modified residue" description="Pentaglycyl murein peptidoglycan amidated threonine" evidence="2">
    <location>
        <position position="688"/>
    </location>
</feature>
<feature type="helix" evidence="6">
    <location>
        <begin position="154"/>
        <end position="157"/>
    </location>
</feature>
<feature type="strand" evidence="6">
    <location>
        <begin position="162"/>
        <end position="166"/>
    </location>
</feature>
<feature type="helix" evidence="6">
    <location>
        <begin position="168"/>
        <end position="179"/>
    </location>
</feature>
<feature type="helix" evidence="6">
    <location>
        <begin position="182"/>
        <end position="185"/>
    </location>
</feature>
<feature type="strand" evidence="6">
    <location>
        <begin position="186"/>
        <end position="189"/>
    </location>
</feature>
<feature type="strand" evidence="6">
    <location>
        <begin position="191"/>
        <end position="198"/>
    </location>
</feature>
<feature type="strand" evidence="6">
    <location>
        <begin position="206"/>
        <end position="210"/>
    </location>
</feature>
<feature type="strand" evidence="6">
    <location>
        <begin position="214"/>
        <end position="218"/>
    </location>
</feature>
<feature type="strand" evidence="6">
    <location>
        <begin position="227"/>
        <end position="233"/>
    </location>
</feature>
<feature type="strand" evidence="6">
    <location>
        <begin position="247"/>
        <end position="258"/>
    </location>
</feature>
<feature type="strand" evidence="6">
    <location>
        <begin position="267"/>
        <end position="272"/>
    </location>
</feature>
<feature type="strand" evidence="6">
    <location>
        <begin position="279"/>
        <end position="294"/>
    </location>
</feature>
<feature type="strand" evidence="6">
    <location>
        <begin position="296"/>
        <end position="303"/>
    </location>
</feature>
<feature type="strand" evidence="6">
    <location>
        <begin position="305"/>
        <end position="310"/>
    </location>
</feature>
<feature type="strand" evidence="6">
    <location>
        <begin position="312"/>
        <end position="318"/>
    </location>
</feature>
<feature type="strand" evidence="6">
    <location>
        <begin position="320"/>
        <end position="325"/>
    </location>
</feature>
<feature type="helix" evidence="6">
    <location>
        <begin position="332"/>
        <end position="335"/>
    </location>
</feature>
<feature type="strand" evidence="6">
    <location>
        <begin position="339"/>
        <end position="344"/>
    </location>
</feature>
<feature type="turn" evidence="6">
    <location>
        <begin position="348"/>
        <end position="350"/>
    </location>
</feature>
<feature type="strand" evidence="6">
    <location>
        <begin position="363"/>
        <end position="369"/>
    </location>
</feature>
<feature type="strand" evidence="6">
    <location>
        <begin position="371"/>
        <end position="373"/>
    </location>
</feature>
<feature type="strand" evidence="6">
    <location>
        <begin position="376"/>
        <end position="378"/>
    </location>
</feature>
<feature type="strand" evidence="6">
    <location>
        <begin position="382"/>
        <end position="386"/>
    </location>
</feature>
<feature type="strand" evidence="6">
    <location>
        <begin position="398"/>
        <end position="404"/>
    </location>
</feature>
<feature type="strand" evidence="6">
    <location>
        <begin position="406"/>
        <end position="409"/>
    </location>
</feature>
<feature type="strand" evidence="6">
    <location>
        <begin position="411"/>
        <end position="419"/>
    </location>
</feature>
<feature type="strand" evidence="6">
    <location>
        <begin position="421"/>
        <end position="427"/>
    </location>
</feature>
<feature type="strand" evidence="6">
    <location>
        <begin position="429"/>
        <end position="432"/>
    </location>
</feature>
<feature type="helix" evidence="6">
    <location>
        <begin position="435"/>
        <end position="437"/>
    </location>
</feature>
<feature type="strand" evidence="6">
    <location>
        <begin position="446"/>
        <end position="451"/>
    </location>
</feature>
<feature type="strand" evidence="6">
    <location>
        <begin position="457"/>
        <end position="459"/>
    </location>
</feature>
<feature type="strand" evidence="6">
    <location>
        <begin position="465"/>
        <end position="471"/>
    </location>
</feature>
<feature type="strand" evidence="6">
    <location>
        <begin position="473"/>
        <end position="476"/>
    </location>
</feature>
<feature type="strand" evidence="6">
    <location>
        <begin position="481"/>
        <end position="487"/>
    </location>
</feature>
<feature type="strand" evidence="6">
    <location>
        <begin position="498"/>
        <end position="504"/>
    </location>
</feature>
<feature type="strand" evidence="6">
    <location>
        <begin position="506"/>
        <end position="509"/>
    </location>
</feature>
<feature type="strand" evidence="6">
    <location>
        <begin position="518"/>
        <end position="522"/>
    </location>
</feature>
<feature type="strand" evidence="6">
    <location>
        <begin position="526"/>
        <end position="532"/>
    </location>
</feature>
<feature type="strand" evidence="6">
    <location>
        <begin position="534"/>
        <end position="539"/>
    </location>
</feature>
<feature type="strand" evidence="6">
    <location>
        <begin position="542"/>
        <end position="546"/>
    </location>
</feature>
<feature type="strand" evidence="6">
    <location>
        <begin position="551"/>
        <end position="554"/>
    </location>
</feature>
<feature type="strand" evidence="6">
    <location>
        <begin position="557"/>
        <end position="560"/>
    </location>
</feature>
<feature type="strand" evidence="6">
    <location>
        <begin position="565"/>
        <end position="571"/>
    </location>
</feature>
<feature type="strand" evidence="6">
    <location>
        <begin position="576"/>
        <end position="578"/>
    </location>
</feature>
<feature type="strand" evidence="6">
    <location>
        <begin position="585"/>
        <end position="592"/>
    </location>
</feature>
<feature type="strand" evidence="6">
    <location>
        <begin position="595"/>
        <end position="600"/>
    </location>
</feature>
<comment type="function">
    <text>Acts as a fibronectin-dependent adhesin and invasin. Binds host (in this case human) fibronectin, plasmin, plasminogen, and human serum albumin. Where the bacteria adhere to human cells there is major recruitment of microvilli which seem to fuse to cover the streptococcal chains. Antibodies to this protein reduce bacterial growth in human blood.</text>
</comment>
<comment type="subcellular location">
    <subcellularLocation>
        <location evidence="5">Secreted</location>
        <location evidence="5">Cell wall</location>
        <topology evidence="5">Peptidoglycan-anchor</topology>
    </subcellularLocation>
</comment>
<comment type="disruption phenotype">
    <text evidence="4">Cells lacking this gene adhere to and invade human cell lines half as well as wild-type bacteria. They grow less well in human blood, perhaps because they are more resistant to phagocytosis.</text>
</comment>
<comment type="biotechnology">
    <text evidence="4">Has potential use as a vaccine component.</text>
</comment>
<name>PFBA_STRR6</name>
<keyword id="KW-0002">3D-structure</keyword>
<keyword id="KW-0134">Cell wall</keyword>
<keyword id="KW-0175">Coiled coil</keyword>
<keyword id="KW-0572">Peptidoglycan-anchor</keyword>
<keyword id="KW-1185">Reference proteome</keyword>
<keyword id="KW-0677">Repeat</keyword>
<keyword id="KW-0964">Secreted</keyword>
<keyword id="KW-0732">Signal</keyword>
<keyword id="KW-0843">Virulence</keyword>
<organism>
    <name type="scientific">Streptococcus pneumoniae (strain ATCC BAA-255 / R6)</name>
    <dbReference type="NCBI Taxonomy" id="171101"/>
    <lineage>
        <taxon>Bacteria</taxon>
        <taxon>Bacillati</taxon>
        <taxon>Bacillota</taxon>
        <taxon>Bacilli</taxon>
        <taxon>Lactobacillales</taxon>
        <taxon>Streptococcaceae</taxon>
        <taxon>Streptococcus</taxon>
    </lineage>
</organism>
<sequence length="719" mass="79016">MLKIVKKLEVLMKYFVPNEVFSIRKLKVGTCSVLLAISILGSQGILSDEVVTSSSPMATKESSNAITNDLDNSPTVNQNRSAEMIASNSTTNGLDNSLSVNSISSNGTIRSNSQLDNRTVESTVTSTNENKSYKEDVISDRIIKKEFEDTALSVKDYGAVGDGIHDDRQAIQDAIDAAAQGLGGGNVYFPEGTYLVKEIVFLKSHTHLELNEKATILNGINIKNHPSIVFMTGLFTDDGAQVEWGPTEDISYSGGTIDMNGALNEEGTKAKNLPLINSSGAFAIGNSNNVTIKNVTFKDSYQGHAIQIAGSKNVLVDNSRFLGQALPKTMKDGQIISKESIQIEPLTRKGFPYALNDDGKKSENVTIQNSYFGKSDKSGELVTAIGTHYQTLSTQNPSNIKILNNHFDNMMYAGVRFTGFTDVLIKGNRFDKKVKGESVHYRESGAALVNAYSYKNTKDLLDLNKQVVIAENIFNIADPKTKAIRVAKDSAEYLGKVSDITVTKNVINNNSKETEQPNIELLRVSDNLVVSENSIFGGKEGIVIEDSKGKITVLNNQFYNLSGKYISFIKSNANGKEPVIRDSDGNFNIVTENGLYKIVTNNLSDKNEKEKNKEEKQSNSNNVIDSNQKNGEFNSSKDNRQMNDKIDNKQDNKTEEVNYKIVGDGRETENHINKSKEIVDVKQKLPKTGSNKIMELFLTVTGIGLLLTLKGLKYYGKDK</sequence>
<protein>
    <recommendedName>
        <fullName>Plasmin and fibronectin-binding protein A</fullName>
    </recommendedName>
</protein>
<dbReference type="EMBL" id="AE007317">
    <property type="protein sequence ID" value="AAL00455.1"/>
    <property type="molecule type" value="Genomic_DNA"/>
</dbReference>
<dbReference type="PIR" id="B98078">
    <property type="entry name" value="B98078"/>
</dbReference>
<dbReference type="RefSeq" id="NP_359244.1">
    <property type="nucleotide sequence ID" value="NC_003098.1"/>
</dbReference>
<dbReference type="RefSeq" id="WP_010976622.1">
    <property type="nucleotide sequence ID" value="NC_003098.1"/>
</dbReference>
<dbReference type="PDB" id="4MR0">
    <property type="method" value="X-ray"/>
    <property type="resolution" value="1.95 A"/>
    <property type="chains" value="A/B=150-607"/>
</dbReference>
<dbReference type="PDBsum" id="4MR0"/>
<dbReference type="SMR" id="Q8CYC9"/>
<dbReference type="STRING" id="171101.spr1652"/>
<dbReference type="KEGG" id="spr:spr1652"/>
<dbReference type="PATRIC" id="fig|171101.6.peg.1781"/>
<dbReference type="eggNOG" id="COG5434">
    <property type="taxonomic scope" value="Bacteria"/>
</dbReference>
<dbReference type="HOGENOM" id="CLU_389752_0_0_9"/>
<dbReference type="EvolutionaryTrace" id="Q8CYC9"/>
<dbReference type="Proteomes" id="UP000000586">
    <property type="component" value="Chromosome"/>
</dbReference>
<dbReference type="GO" id="GO:0005576">
    <property type="term" value="C:extracellular region"/>
    <property type="evidence" value="ECO:0007669"/>
    <property type="project" value="UniProtKB-KW"/>
</dbReference>
<dbReference type="FunFam" id="2.160.20.10:FF:000095">
    <property type="entry name" value="Plasmin and fibronectin-binding protein A"/>
    <property type="match status" value="1"/>
</dbReference>
<dbReference type="Gene3D" id="2.160.20.10">
    <property type="entry name" value="Single-stranded right-handed beta-helix, Pectin lyase-like"/>
    <property type="match status" value="1"/>
</dbReference>
<dbReference type="InterPro" id="IPR039448">
    <property type="entry name" value="Beta_helix"/>
</dbReference>
<dbReference type="InterPro" id="IPR051801">
    <property type="entry name" value="GH28_Enzymes"/>
</dbReference>
<dbReference type="InterPro" id="IPR019931">
    <property type="entry name" value="LPXTG_anchor"/>
</dbReference>
<dbReference type="InterPro" id="IPR006626">
    <property type="entry name" value="PbH1"/>
</dbReference>
<dbReference type="InterPro" id="IPR012334">
    <property type="entry name" value="Pectin_lyas_fold"/>
</dbReference>
<dbReference type="InterPro" id="IPR011050">
    <property type="entry name" value="Pectin_lyase_fold/virulence"/>
</dbReference>
<dbReference type="InterPro" id="IPR024535">
    <property type="entry name" value="RHGA/B-epi-like_pectate_lyase"/>
</dbReference>
<dbReference type="InterPro" id="IPR005877">
    <property type="entry name" value="YSIRK_signal_dom"/>
</dbReference>
<dbReference type="NCBIfam" id="TIGR01168">
    <property type="entry name" value="YSIRK_signal"/>
    <property type="match status" value="1"/>
</dbReference>
<dbReference type="PANTHER" id="PTHR31339">
    <property type="entry name" value="PECTIN LYASE-RELATED"/>
    <property type="match status" value="1"/>
</dbReference>
<dbReference type="PANTHER" id="PTHR31339:SF9">
    <property type="entry name" value="PLASMIN AND FIBRONECTIN-BINDING PROTEIN A"/>
    <property type="match status" value="1"/>
</dbReference>
<dbReference type="Pfam" id="PF13229">
    <property type="entry name" value="Beta_helix"/>
    <property type="match status" value="1"/>
</dbReference>
<dbReference type="Pfam" id="PF12708">
    <property type="entry name" value="Pect-lyase_RHGA_epim"/>
    <property type="match status" value="1"/>
</dbReference>
<dbReference type="Pfam" id="PF04650">
    <property type="entry name" value="YSIRK_signal"/>
    <property type="match status" value="1"/>
</dbReference>
<dbReference type="SMART" id="SM00710">
    <property type="entry name" value="PbH1"/>
    <property type="match status" value="5"/>
</dbReference>
<dbReference type="SUPFAM" id="SSF51126">
    <property type="entry name" value="Pectin lyase-like"/>
    <property type="match status" value="2"/>
</dbReference>
<dbReference type="PROSITE" id="PS50847">
    <property type="entry name" value="GRAM_POS_ANCHORING"/>
    <property type="match status" value="1"/>
</dbReference>
<proteinExistence type="evidence at protein level"/>
<gene>
    <name type="primary">pfbA</name>
    <name type="ordered locus">spr1652</name>
</gene>